<gene>
    <name type="ORF">FVEG_12640</name>
</gene>
<comment type="function">
    <text evidence="3 4 7">Transmembrane transporter; part of the Fusarium detoxification of benzoxazolinone cluster 2 (FDB2) involved in the degradation of benzoxazolinones produced by the host plant (PubMed:26808652). Maize, wheat, and rye produce the 2 benzoxazinone phytoanticipins 2,4-dihy-droxy-7-methoxy-1,4-benzoxazin-3-one (DIMBOA) and 2,4-dihydroxy-1,4-benzoxazin-3-one (DIBOA) that, due to their inherent instability once released, spontaneously degrade to the more stable corresponding benzoxazolinones, 6-methoxy-2-benzoxazolinone (MBOA) and 2-benzoxazolinone (BOA), respectively (PubMed:11876429). Might be involved in the transport of metabolites of benzoxazolinone degradation (Probable).</text>
</comment>
<comment type="subcellular location">
    <subcellularLocation>
        <location evidence="1">Membrane</location>
        <topology evidence="1">Multi-pass membrane protein</topology>
    </subcellularLocation>
</comment>
<comment type="induction">
    <text evidence="4">Expression is induced in response to 2-benzoxazolinone (BOA) exposure.</text>
</comment>
<comment type="miscellaneous">
    <text evidence="7">Fusarium verticillioides possesses 2 unlinked loci, FDB1 and FDB2, necessary for detoxification of antimicrobial compounds produced by maize, including 2-benzoxazolinone (BOA) (Probable). The FDB2 cluster arose as a duplication of the FDB1 cluster with rearrangement and expansion by incorporating additional genes (Probable).</text>
</comment>
<comment type="similarity">
    <text evidence="6">Belongs to the amino acid/polyamine transporter 2 family.</text>
</comment>
<sequence length="474" mass="51169">MASPTISSMEQYTPSSKDEKIVPLHGDAAGSDTEKGESREVFQENVDGVEFRTVSWQRATVVFLKINFAMSILAIPGALGALGSVGGSLCIVGYTSLNVYTALVLGDFKHNHTECHTLADMMGLIWGRWGRELVGVQIIVAQVLISAGGIVTSAIGLNALSDHGTCTVMFALVSAILITLFSSIRTFARLGWLTWFGFITFVLGVFIFVVAVTQVDRPAAAPKTGDFELGWAPIAYPSFVVGMINATNIFISTCGSSMFLPVISEMKRPHDYRKACLVAGFIVGAMYLSFSLVIYRWCGTWISTPAFGSAGPLIKKVAYGVSLPGLILGVGIYQHVAAKYAFVRILRDSEHLQANTFTHWGTWLGINLALGTAAFIVAEAVPILNYLLGLAGSLCFAPFSLVFPALLWMYDFKSYKTGTLGQKIKYGLHILIMILGFYMIVAGTYSVAVLIKEAFNTGAIAKVFDCADNSGFVQ</sequence>
<keyword id="KW-0472">Membrane</keyword>
<keyword id="KW-1185">Reference proteome</keyword>
<keyword id="KW-0812">Transmembrane</keyword>
<keyword id="KW-1133">Transmembrane helix</keyword>
<keyword id="KW-0813">Transport</keyword>
<protein>
    <recommendedName>
        <fullName evidence="5">Transmembrane transporter FVEG_12640</fullName>
    </recommendedName>
    <alternativeName>
        <fullName evidence="5">Fusarium detoxification of benzoxazolinone cluster 2 protein FVEG_12640</fullName>
        <shortName evidence="5">FDB2 cluster protein FVEG_12640</shortName>
    </alternativeName>
</protein>
<name>FDB40_GIBM7</name>
<dbReference type="EMBL" id="CM000580">
    <property type="protein sequence ID" value="EWG54422.1"/>
    <property type="molecule type" value="Genomic_DNA"/>
</dbReference>
<dbReference type="RefSeq" id="XP_018760613.1">
    <property type="nucleotide sequence ID" value="XM_018901990.1"/>
</dbReference>
<dbReference type="GeneID" id="30070068"/>
<dbReference type="KEGG" id="fvr:FVEG_12640"/>
<dbReference type="VEuPathDB" id="FungiDB:FVEG_12640"/>
<dbReference type="eggNOG" id="ENOG502SHQ6">
    <property type="taxonomic scope" value="Eukaryota"/>
</dbReference>
<dbReference type="OrthoDB" id="86593at110618"/>
<dbReference type="Proteomes" id="UP000009096">
    <property type="component" value="Chromosome 3"/>
</dbReference>
<dbReference type="GO" id="GO:0016020">
    <property type="term" value="C:membrane"/>
    <property type="evidence" value="ECO:0007669"/>
    <property type="project" value="UniProtKB-SubCell"/>
</dbReference>
<dbReference type="GO" id="GO:0015179">
    <property type="term" value="F:L-amino acid transmembrane transporter activity"/>
    <property type="evidence" value="ECO:0007669"/>
    <property type="project" value="TreeGrafter"/>
</dbReference>
<dbReference type="FunFam" id="1.20.1740.10:FF:000039">
    <property type="entry name" value="Neutral amino acid transporter (Eurofung)"/>
    <property type="match status" value="1"/>
</dbReference>
<dbReference type="InterPro" id="IPR013057">
    <property type="entry name" value="AA_transpt_TM"/>
</dbReference>
<dbReference type="PANTHER" id="PTHR22950">
    <property type="entry name" value="AMINO ACID TRANSPORTER"/>
    <property type="match status" value="1"/>
</dbReference>
<dbReference type="PANTHER" id="PTHR22950:SF697">
    <property type="entry name" value="AMINO ACID TRANSPORTER (EUROFUNG)"/>
    <property type="match status" value="1"/>
</dbReference>
<dbReference type="Pfam" id="PF01490">
    <property type="entry name" value="Aa_trans"/>
    <property type="match status" value="1"/>
</dbReference>
<proteinExistence type="evidence at transcript level"/>
<accession>W7NDQ0</accession>
<organism>
    <name type="scientific">Gibberella moniliformis (strain M3125 / FGSC 7600)</name>
    <name type="common">Maize ear and stalk rot fungus</name>
    <name type="synonym">Fusarium verticillioides</name>
    <dbReference type="NCBI Taxonomy" id="334819"/>
    <lineage>
        <taxon>Eukaryota</taxon>
        <taxon>Fungi</taxon>
        <taxon>Dikarya</taxon>
        <taxon>Ascomycota</taxon>
        <taxon>Pezizomycotina</taxon>
        <taxon>Sordariomycetes</taxon>
        <taxon>Hypocreomycetidae</taxon>
        <taxon>Hypocreales</taxon>
        <taxon>Nectriaceae</taxon>
        <taxon>Fusarium</taxon>
        <taxon>Fusarium fujikuroi species complex</taxon>
    </lineage>
</organism>
<evidence type="ECO:0000255" key="1"/>
<evidence type="ECO:0000256" key="2">
    <source>
        <dbReference type="SAM" id="MobiDB-lite"/>
    </source>
</evidence>
<evidence type="ECO:0000269" key="3">
    <source>
    </source>
</evidence>
<evidence type="ECO:0000269" key="4">
    <source>
    </source>
</evidence>
<evidence type="ECO:0000303" key="5">
    <source>
    </source>
</evidence>
<evidence type="ECO:0000305" key="6"/>
<evidence type="ECO:0000305" key="7">
    <source>
    </source>
</evidence>
<reference key="1">
    <citation type="journal article" date="2010" name="Nature">
        <title>Comparative genomics reveals mobile pathogenicity chromosomes in Fusarium.</title>
        <authorList>
            <person name="Ma L.-J."/>
            <person name="van der Does H.C."/>
            <person name="Borkovich K.A."/>
            <person name="Coleman J.J."/>
            <person name="Daboussi M.-J."/>
            <person name="Di Pietro A."/>
            <person name="Dufresne M."/>
            <person name="Freitag M."/>
            <person name="Grabherr M."/>
            <person name="Henrissat B."/>
            <person name="Houterman P.M."/>
            <person name="Kang S."/>
            <person name="Shim W.-B."/>
            <person name="Woloshuk C."/>
            <person name="Xie X."/>
            <person name="Xu J.-R."/>
            <person name="Antoniw J."/>
            <person name="Baker S.E."/>
            <person name="Bluhm B.H."/>
            <person name="Breakspear A."/>
            <person name="Brown D.W."/>
            <person name="Butchko R.A.E."/>
            <person name="Chapman S."/>
            <person name="Coulson R."/>
            <person name="Coutinho P.M."/>
            <person name="Danchin E.G.J."/>
            <person name="Diener A."/>
            <person name="Gale L.R."/>
            <person name="Gardiner D.M."/>
            <person name="Goff S."/>
            <person name="Hammond-Kosack K.E."/>
            <person name="Hilburn K."/>
            <person name="Hua-Van A."/>
            <person name="Jonkers W."/>
            <person name="Kazan K."/>
            <person name="Kodira C.D."/>
            <person name="Koehrsen M."/>
            <person name="Kumar L."/>
            <person name="Lee Y.-H."/>
            <person name="Li L."/>
            <person name="Manners J.M."/>
            <person name="Miranda-Saavedra D."/>
            <person name="Mukherjee M."/>
            <person name="Park G."/>
            <person name="Park J."/>
            <person name="Park S.-Y."/>
            <person name="Proctor R.H."/>
            <person name="Regev A."/>
            <person name="Ruiz-Roldan M.C."/>
            <person name="Sain D."/>
            <person name="Sakthikumar S."/>
            <person name="Sykes S."/>
            <person name="Schwartz D.C."/>
            <person name="Turgeon B.G."/>
            <person name="Wapinski I."/>
            <person name="Yoder O."/>
            <person name="Young S."/>
            <person name="Zeng Q."/>
            <person name="Zhou S."/>
            <person name="Galagan J."/>
            <person name="Cuomo C.A."/>
            <person name="Kistler H.C."/>
            <person name="Rep M."/>
        </authorList>
    </citation>
    <scope>NUCLEOTIDE SEQUENCE [LARGE SCALE GENOMIC DNA]</scope>
    <source>
        <strain>M3125 / FGSC 7600</strain>
    </source>
</reference>
<reference key="2">
    <citation type="journal article" date="2002" name="Mol. Plant Microbe Interact.">
        <title>Fdb1 and Fdb2, Fusarium verticillioides loci necessary for detoxification of preformed antimicrobials from corn.</title>
        <authorList>
            <person name="Glenn A.E."/>
            <person name="Gold S.E."/>
            <person name="Bacon C.W."/>
        </authorList>
    </citation>
    <scope>FUNCTION</scope>
</reference>
<reference key="3">
    <citation type="journal article" date="2016" name="PLoS ONE">
        <title>Two horizontally transferred xenobiotic resistance gene clusters associated with detoxification of benzoxazolinones by Fusarium species.</title>
        <authorList>
            <person name="Glenn A.E."/>
            <person name="Davis C.B."/>
            <person name="Gao M."/>
            <person name="Gold S.E."/>
            <person name="Mitchell T.R."/>
            <person name="Proctor R.H."/>
            <person name="Stewart J.E."/>
            <person name="Snook M.E."/>
        </authorList>
    </citation>
    <scope>FUNCTION</scope>
    <scope>INDUCTION</scope>
</reference>
<feature type="chain" id="PRO_0000454609" description="Transmembrane transporter FVEG_12640">
    <location>
        <begin position="1"/>
        <end position="474"/>
    </location>
</feature>
<feature type="transmembrane region" description="Helical" evidence="1">
    <location>
        <begin position="72"/>
        <end position="92"/>
    </location>
</feature>
<feature type="transmembrane region" description="Helical" evidence="1">
    <location>
        <begin position="133"/>
        <end position="153"/>
    </location>
</feature>
<feature type="transmembrane region" description="Helical" evidence="1">
    <location>
        <begin position="164"/>
        <end position="184"/>
    </location>
</feature>
<feature type="transmembrane region" description="Helical" evidence="1">
    <location>
        <begin position="192"/>
        <end position="212"/>
    </location>
</feature>
<feature type="transmembrane region" description="Helical" evidence="1">
    <location>
        <begin position="231"/>
        <end position="251"/>
    </location>
</feature>
<feature type="transmembrane region" description="Helical" evidence="1">
    <location>
        <begin position="275"/>
        <end position="295"/>
    </location>
</feature>
<feature type="transmembrane region" description="Helical" evidence="1">
    <location>
        <begin position="317"/>
        <end position="337"/>
    </location>
</feature>
<feature type="transmembrane region" description="Helical" evidence="1">
    <location>
        <begin position="364"/>
        <end position="384"/>
    </location>
</feature>
<feature type="transmembrane region" description="Helical" evidence="1">
    <location>
        <begin position="387"/>
        <end position="407"/>
    </location>
</feature>
<feature type="transmembrane region" description="Helical" evidence="1">
    <location>
        <begin position="431"/>
        <end position="451"/>
    </location>
</feature>
<feature type="region of interest" description="Disordered" evidence="2">
    <location>
        <begin position="1"/>
        <end position="39"/>
    </location>
</feature>
<feature type="compositionally biased region" description="Polar residues" evidence="2">
    <location>
        <begin position="1"/>
        <end position="15"/>
    </location>
</feature>